<reference key="1">
    <citation type="journal article" date="2008" name="J. Bacteriol.">
        <title>Comparative genome sequence analysis of multidrug-resistant Acinetobacter baumannii.</title>
        <authorList>
            <person name="Adams M.D."/>
            <person name="Goglin K."/>
            <person name="Molyneaux N."/>
            <person name="Hujer K.M."/>
            <person name="Lavender H."/>
            <person name="Jamison J.J."/>
            <person name="MacDonald I.J."/>
            <person name="Martin K.M."/>
            <person name="Russo T."/>
            <person name="Campagnari A.A."/>
            <person name="Hujer A.M."/>
            <person name="Bonomo R.A."/>
            <person name="Gill S.R."/>
        </authorList>
    </citation>
    <scope>NUCLEOTIDE SEQUENCE [LARGE SCALE GENOMIC DNA]</scope>
    <source>
        <strain>AB0057</strain>
    </source>
</reference>
<feature type="chain" id="PRO_1000117318" description="Translation initiation factor IF-2">
    <location>
        <begin position="1"/>
        <end position="899"/>
    </location>
</feature>
<feature type="domain" description="tr-type G">
    <location>
        <begin position="399"/>
        <end position="568"/>
    </location>
</feature>
<feature type="region of interest" description="Disordered" evidence="3">
    <location>
        <begin position="116"/>
        <end position="135"/>
    </location>
</feature>
<feature type="region of interest" description="Disordered" evidence="3">
    <location>
        <begin position="170"/>
        <end position="189"/>
    </location>
</feature>
<feature type="region of interest" description="Disordered" evidence="3">
    <location>
        <begin position="262"/>
        <end position="306"/>
    </location>
</feature>
<feature type="region of interest" description="G1" evidence="1">
    <location>
        <begin position="408"/>
        <end position="415"/>
    </location>
</feature>
<feature type="region of interest" description="G2" evidence="1">
    <location>
        <begin position="433"/>
        <end position="437"/>
    </location>
</feature>
<feature type="region of interest" description="G3" evidence="1">
    <location>
        <begin position="454"/>
        <end position="457"/>
    </location>
</feature>
<feature type="region of interest" description="G4" evidence="1">
    <location>
        <begin position="508"/>
        <end position="511"/>
    </location>
</feature>
<feature type="region of interest" description="G5" evidence="1">
    <location>
        <begin position="544"/>
        <end position="546"/>
    </location>
</feature>
<feature type="binding site" evidence="2">
    <location>
        <begin position="408"/>
        <end position="415"/>
    </location>
    <ligand>
        <name>GTP</name>
        <dbReference type="ChEBI" id="CHEBI:37565"/>
    </ligand>
</feature>
<feature type="binding site" evidence="2">
    <location>
        <begin position="454"/>
        <end position="458"/>
    </location>
    <ligand>
        <name>GTP</name>
        <dbReference type="ChEBI" id="CHEBI:37565"/>
    </ligand>
</feature>
<feature type="binding site" evidence="2">
    <location>
        <begin position="508"/>
        <end position="511"/>
    </location>
    <ligand>
        <name>GTP</name>
        <dbReference type="ChEBI" id="CHEBI:37565"/>
    </ligand>
</feature>
<comment type="function">
    <text evidence="2">One of the essential components for the initiation of protein synthesis. Protects formylmethionyl-tRNA from spontaneous hydrolysis and promotes its binding to the 30S ribosomal subunits. Also involved in the hydrolysis of GTP during the formation of the 70S ribosomal complex.</text>
</comment>
<comment type="subcellular location">
    <subcellularLocation>
        <location evidence="2">Cytoplasm</location>
    </subcellularLocation>
</comment>
<comment type="similarity">
    <text evidence="2">Belongs to the TRAFAC class translation factor GTPase superfamily. Classic translation factor GTPase family. IF-2 subfamily.</text>
</comment>
<proteinExistence type="inferred from homology"/>
<name>IF2_ACIB5</name>
<gene>
    <name evidence="2" type="primary">infB</name>
    <name type="ordered locus">AB57_0415</name>
</gene>
<dbReference type="EMBL" id="CP001182">
    <property type="protein sequence ID" value="ACJ39841.1"/>
    <property type="molecule type" value="Genomic_DNA"/>
</dbReference>
<dbReference type="RefSeq" id="WP_000130326.1">
    <property type="nucleotide sequence ID" value="NC_011586.2"/>
</dbReference>
<dbReference type="SMR" id="B7I3R9"/>
<dbReference type="GeneID" id="92892331"/>
<dbReference type="KEGG" id="abn:AB57_0415"/>
<dbReference type="HOGENOM" id="CLU_006301_6_2_6"/>
<dbReference type="Proteomes" id="UP000007094">
    <property type="component" value="Chromosome"/>
</dbReference>
<dbReference type="GO" id="GO:0005829">
    <property type="term" value="C:cytosol"/>
    <property type="evidence" value="ECO:0007669"/>
    <property type="project" value="TreeGrafter"/>
</dbReference>
<dbReference type="GO" id="GO:0005525">
    <property type="term" value="F:GTP binding"/>
    <property type="evidence" value="ECO:0007669"/>
    <property type="project" value="UniProtKB-KW"/>
</dbReference>
<dbReference type="GO" id="GO:0003924">
    <property type="term" value="F:GTPase activity"/>
    <property type="evidence" value="ECO:0007669"/>
    <property type="project" value="UniProtKB-UniRule"/>
</dbReference>
<dbReference type="GO" id="GO:0003743">
    <property type="term" value="F:translation initiation factor activity"/>
    <property type="evidence" value="ECO:0007669"/>
    <property type="project" value="UniProtKB-UniRule"/>
</dbReference>
<dbReference type="CDD" id="cd01887">
    <property type="entry name" value="IF2_eIF5B"/>
    <property type="match status" value="1"/>
</dbReference>
<dbReference type="CDD" id="cd03702">
    <property type="entry name" value="IF2_mtIF2_II"/>
    <property type="match status" value="1"/>
</dbReference>
<dbReference type="CDD" id="cd03692">
    <property type="entry name" value="mtIF2_IVc"/>
    <property type="match status" value="1"/>
</dbReference>
<dbReference type="FunFam" id="2.40.30.10:FF:000007">
    <property type="entry name" value="Translation initiation factor IF-2"/>
    <property type="match status" value="1"/>
</dbReference>
<dbReference type="FunFam" id="2.40.30.10:FF:000008">
    <property type="entry name" value="Translation initiation factor IF-2"/>
    <property type="match status" value="1"/>
</dbReference>
<dbReference type="FunFam" id="3.40.50.10050:FF:000001">
    <property type="entry name" value="Translation initiation factor IF-2"/>
    <property type="match status" value="1"/>
</dbReference>
<dbReference type="FunFam" id="3.40.50.300:FF:000019">
    <property type="entry name" value="Translation initiation factor IF-2"/>
    <property type="match status" value="1"/>
</dbReference>
<dbReference type="Gene3D" id="3.40.50.300">
    <property type="entry name" value="P-loop containing nucleotide triphosphate hydrolases"/>
    <property type="match status" value="1"/>
</dbReference>
<dbReference type="Gene3D" id="3.30.56.50">
    <property type="entry name" value="Putative DNA-binding domain, N-terminal subdomain of bacterial translation initiation factor IF2"/>
    <property type="match status" value="1"/>
</dbReference>
<dbReference type="Gene3D" id="2.40.30.10">
    <property type="entry name" value="Translation factors"/>
    <property type="match status" value="2"/>
</dbReference>
<dbReference type="Gene3D" id="3.40.50.10050">
    <property type="entry name" value="Translation initiation factor IF- 2, domain 3"/>
    <property type="match status" value="1"/>
</dbReference>
<dbReference type="HAMAP" id="MF_00100_B">
    <property type="entry name" value="IF_2_B"/>
    <property type="match status" value="1"/>
</dbReference>
<dbReference type="InterPro" id="IPR009061">
    <property type="entry name" value="DNA-bd_dom_put_sf"/>
</dbReference>
<dbReference type="InterPro" id="IPR053905">
    <property type="entry name" value="EF-G-like_DII"/>
</dbReference>
<dbReference type="InterPro" id="IPR013575">
    <property type="entry name" value="IF2_assoc_dom_bac"/>
</dbReference>
<dbReference type="InterPro" id="IPR044145">
    <property type="entry name" value="IF2_II"/>
</dbReference>
<dbReference type="InterPro" id="IPR006847">
    <property type="entry name" value="IF2_N"/>
</dbReference>
<dbReference type="InterPro" id="IPR027417">
    <property type="entry name" value="P-loop_NTPase"/>
</dbReference>
<dbReference type="InterPro" id="IPR005225">
    <property type="entry name" value="Small_GTP-bd"/>
</dbReference>
<dbReference type="InterPro" id="IPR000795">
    <property type="entry name" value="T_Tr_GTP-bd_dom"/>
</dbReference>
<dbReference type="InterPro" id="IPR000178">
    <property type="entry name" value="TF_IF2_bacterial-like"/>
</dbReference>
<dbReference type="InterPro" id="IPR015760">
    <property type="entry name" value="TIF_IF2"/>
</dbReference>
<dbReference type="InterPro" id="IPR023115">
    <property type="entry name" value="TIF_IF2_dom3"/>
</dbReference>
<dbReference type="InterPro" id="IPR036925">
    <property type="entry name" value="TIF_IF2_dom3_sf"/>
</dbReference>
<dbReference type="InterPro" id="IPR009000">
    <property type="entry name" value="Transl_B-barrel_sf"/>
</dbReference>
<dbReference type="NCBIfam" id="TIGR00487">
    <property type="entry name" value="IF-2"/>
    <property type="match status" value="1"/>
</dbReference>
<dbReference type="NCBIfam" id="TIGR00231">
    <property type="entry name" value="small_GTP"/>
    <property type="match status" value="1"/>
</dbReference>
<dbReference type="PANTHER" id="PTHR43381:SF5">
    <property type="entry name" value="TR-TYPE G DOMAIN-CONTAINING PROTEIN"/>
    <property type="match status" value="1"/>
</dbReference>
<dbReference type="PANTHER" id="PTHR43381">
    <property type="entry name" value="TRANSLATION INITIATION FACTOR IF-2-RELATED"/>
    <property type="match status" value="1"/>
</dbReference>
<dbReference type="Pfam" id="PF22042">
    <property type="entry name" value="EF-G_D2"/>
    <property type="match status" value="1"/>
</dbReference>
<dbReference type="Pfam" id="PF00009">
    <property type="entry name" value="GTP_EFTU"/>
    <property type="match status" value="1"/>
</dbReference>
<dbReference type="Pfam" id="PF11987">
    <property type="entry name" value="IF-2"/>
    <property type="match status" value="1"/>
</dbReference>
<dbReference type="Pfam" id="PF08364">
    <property type="entry name" value="IF2_assoc"/>
    <property type="match status" value="1"/>
</dbReference>
<dbReference type="Pfam" id="PF04760">
    <property type="entry name" value="IF2_N"/>
    <property type="match status" value="1"/>
</dbReference>
<dbReference type="SUPFAM" id="SSF52156">
    <property type="entry name" value="Initiation factor IF2/eIF5b, domain 3"/>
    <property type="match status" value="1"/>
</dbReference>
<dbReference type="SUPFAM" id="SSF52540">
    <property type="entry name" value="P-loop containing nucleoside triphosphate hydrolases"/>
    <property type="match status" value="1"/>
</dbReference>
<dbReference type="SUPFAM" id="SSF46955">
    <property type="entry name" value="Putative DNA-binding domain"/>
    <property type="match status" value="1"/>
</dbReference>
<dbReference type="SUPFAM" id="SSF50447">
    <property type="entry name" value="Translation proteins"/>
    <property type="match status" value="2"/>
</dbReference>
<dbReference type="PROSITE" id="PS51722">
    <property type="entry name" value="G_TR_2"/>
    <property type="match status" value="1"/>
</dbReference>
<dbReference type="PROSITE" id="PS01176">
    <property type="entry name" value="IF2"/>
    <property type="match status" value="1"/>
</dbReference>
<sequence>MTDKSIKELALSVGRPVEKLLEQAREAGLPQRTADDIITTEQQDTLVNYLKKVHGQESGNTGKIALKRKTTSTAKVASTSGKAKTINVEVRKKQVFAKPNPEQIAAEAKARAEAEAKARAEQQAREAAEQKARLQTEQKAKATLDAMRAAHQQDSAAQSAPKAAVVVKKRGGGTVKPAPKPAETLEQKKAREAQTAQLKATEEAARRKAAEEAQQRTLEQMRKMASKYSNDDATATIRVIDDSPLASGLVGQAYEDSFNQEDREIKRGGATTNPRAGKKGGRRGQEEQSFVNHNKRGLKSSQANKHGFEKPVKKQVYDVEIGSSIVVADLAQKMAIKVREVIKTLMKMGELVNQNQTIDQDTAALVVEEMGHNPVLVSDTQAEDNLLEAAEEARGEQTTRPPVVTIMGHVDHGKTSLLDRIRRSKVAAGEAGGITQHIGAYHVETDKGIITFLDTPGHAAFTSMRARGAKATDIVVLVVAADDGVMPQTAEAIDHARAAGTPIIVAINKMDKESADPDRVLNELTTKEIVPEEWGGDVPVAKVSAHTGQGIDELLDLILIQSELMELKASAEGAAQGVVIEARVDKGRGAVTSILVQNGTLNIGDLVLAGSSYGRVRAMSDENGKPIKSAGPSIPVEILGLPEAPMAGDEVLVVNDEKKAREVADARADREREKRIERQSAMRLENIMASMGKKDVPTVNVVLRTDVRGTLEALNAALHELSTDEVKVRVISSGVGAITESDVILAESSEAVLLGFNVRADTAARQKSDQDGIDIRYYSIIYELIDDVKDAMSGKLAPEHRETILGVAQVREVFRSSKFGAAAGCMVMEGVIHRNKPIRVLRDDVVIFQGELESLRRYKDVVDEVRAGMECGLAVKGYNDIKPLDKIEVYDVQMVKRSL</sequence>
<evidence type="ECO:0000250" key="1"/>
<evidence type="ECO:0000255" key="2">
    <source>
        <dbReference type="HAMAP-Rule" id="MF_00100"/>
    </source>
</evidence>
<evidence type="ECO:0000256" key="3">
    <source>
        <dbReference type="SAM" id="MobiDB-lite"/>
    </source>
</evidence>
<accession>B7I3R9</accession>
<keyword id="KW-0963">Cytoplasm</keyword>
<keyword id="KW-0342">GTP-binding</keyword>
<keyword id="KW-0396">Initiation factor</keyword>
<keyword id="KW-0547">Nucleotide-binding</keyword>
<keyword id="KW-0648">Protein biosynthesis</keyword>
<organism>
    <name type="scientific">Acinetobacter baumannii (strain AB0057)</name>
    <dbReference type="NCBI Taxonomy" id="480119"/>
    <lineage>
        <taxon>Bacteria</taxon>
        <taxon>Pseudomonadati</taxon>
        <taxon>Pseudomonadota</taxon>
        <taxon>Gammaproteobacteria</taxon>
        <taxon>Moraxellales</taxon>
        <taxon>Moraxellaceae</taxon>
        <taxon>Acinetobacter</taxon>
        <taxon>Acinetobacter calcoaceticus/baumannii complex</taxon>
    </lineage>
</organism>
<protein>
    <recommendedName>
        <fullName evidence="2">Translation initiation factor IF-2</fullName>
    </recommendedName>
</protein>